<proteinExistence type="evidence at transcript level"/>
<accession>Q42896</accession>
<accession>O04994</accession>
<evidence type="ECO:0000250" key="1"/>
<evidence type="ECO:0000305" key="2"/>
<dbReference type="EC" id="2.7.1.4"/>
<dbReference type="EMBL" id="U62329">
    <property type="protein sequence ID" value="AAB51108.1"/>
    <property type="molecule type" value="mRNA"/>
</dbReference>
<dbReference type="EMBL" id="U64818">
    <property type="protein sequence ID" value="AAB57734.1"/>
    <property type="molecule type" value="mRNA"/>
</dbReference>
<dbReference type="RefSeq" id="NP_001233888.1">
    <property type="nucleotide sequence ID" value="NM_001246959.2"/>
</dbReference>
<dbReference type="SMR" id="Q42896"/>
<dbReference type="FunCoup" id="Q42896">
    <property type="interactions" value="640"/>
</dbReference>
<dbReference type="STRING" id="4081.Q42896"/>
<dbReference type="PaxDb" id="4081-Solyc06g073190.2.1"/>
<dbReference type="ProMEX" id="Q42896"/>
<dbReference type="EnsemblPlants" id="Solyc06g073190.3.1">
    <property type="protein sequence ID" value="Solyc06g073190.3.1"/>
    <property type="gene ID" value="Solyc06g073190.3"/>
</dbReference>
<dbReference type="GeneID" id="544022"/>
<dbReference type="Gramene" id="Solyc06g073190.3.1">
    <property type="protein sequence ID" value="Solyc06g073190.3.1"/>
    <property type="gene ID" value="Solyc06g073190.3"/>
</dbReference>
<dbReference type="KEGG" id="sly:544022"/>
<dbReference type="eggNOG" id="KOG2855">
    <property type="taxonomic scope" value="Eukaryota"/>
</dbReference>
<dbReference type="HOGENOM" id="CLU_027634_6_1_1"/>
<dbReference type="InParanoid" id="Q42896"/>
<dbReference type="OMA" id="CANFMPT"/>
<dbReference type="OrthoDB" id="415590at2759"/>
<dbReference type="PhylomeDB" id="Q42896"/>
<dbReference type="BRENDA" id="2.7.1.4">
    <property type="organism ID" value="3101"/>
</dbReference>
<dbReference type="UniPathway" id="UPA00152"/>
<dbReference type="Proteomes" id="UP000004994">
    <property type="component" value="Chromosome 6"/>
</dbReference>
<dbReference type="GO" id="GO:0005829">
    <property type="term" value="C:cytosol"/>
    <property type="evidence" value="ECO:0000318"/>
    <property type="project" value="GO_Central"/>
</dbReference>
<dbReference type="GO" id="GO:0005524">
    <property type="term" value="F:ATP binding"/>
    <property type="evidence" value="ECO:0007669"/>
    <property type="project" value="UniProtKB-KW"/>
</dbReference>
<dbReference type="GO" id="GO:0008865">
    <property type="term" value="F:fructokinase activity"/>
    <property type="evidence" value="ECO:0000318"/>
    <property type="project" value="GO_Central"/>
</dbReference>
<dbReference type="GO" id="GO:0006000">
    <property type="term" value="P:fructose metabolic process"/>
    <property type="evidence" value="ECO:0000318"/>
    <property type="project" value="GO_Central"/>
</dbReference>
<dbReference type="GO" id="GO:0019252">
    <property type="term" value="P:starch biosynthetic process"/>
    <property type="evidence" value="ECO:0007669"/>
    <property type="project" value="UniProtKB-UniPathway"/>
</dbReference>
<dbReference type="CDD" id="cd01167">
    <property type="entry name" value="bac_FRK"/>
    <property type="match status" value="1"/>
</dbReference>
<dbReference type="FunFam" id="3.40.1190.20:FF:000005">
    <property type="entry name" value="Probable fructokinase-2"/>
    <property type="match status" value="1"/>
</dbReference>
<dbReference type="Gene3D" id="3.40.1190.20">
    <property type="match status" value="1"/>
</dbReference>
<dbReference type="InterPro" id="IPR002173">
    <property type="entry name" value="Carboh/pur_kinase_PfkB_CS"/>
</dbReference>
<dbReference type="InterPro" id="IPR050306">
    <property type="entry name" value="PfkB_Carbo_kinase"/>
</dbReference>
<dbReference type="InterPro" id="IPR011611">
    <property type="entry name" value="PfkB_dom"/>
</dbReference>
<dbReference type="InterPro" id="IPR002139">
    <property type="entry name" value="Ribo/fructo_kinase"/>
</dbReference>
<dbReference type="InterPro" id="IPR029056">
    <property type="entry name" value="Ribokinase-like"/>
</dbReference>
<dbReference type="PANTHER" id="PTHR43085:SF24">
    <property type="entry name" value="FRUCTOKINASE-4-RELATED"/>
    <property type="match status" value="1"/>
</dbReference>
<dbReference type="PANTHER" id="PTHR43085">
    <property type="entry name" value="HEXOKINASE FAMILY MEMBER"/>
    <property type="match status" value="1"/>
</dbReference>
<dbReference type="Pfam" id="PF00294">
    <property type="entry name" value="PfkB"/>
    <property type="match status" value="1"/>
</dbReference>
<dbReference type="PRINTS" id="PR00990">
    <property type="entry name" value="RIBOKINASE"/>
</dbReference>
<dbReference type="SUPFAM" id="SSF53613">
    <property type="entry name" value="Ribokinase-like"/>
    <property type="match status" value="1"/>
</dbReference>
<dbReference type="PROSITE" id="PS00583">
    <property type="entry name" value="PFKB_KINASES_1"/>
    <property type="match status" value="1"/>
</dbReference>
<dbReference type="PROSITE" id="PS00584">
    <property type="entry name" value="PFKB_KINASES_2"/>
    <property type="match status" value="1"/>
</dbReference>
<reference key="1">
    <citation type="journal article" date="1997" name="Plant Sci.">
        <title>Molecular cloning and analysis of fructokinase expression in tomato (Lycopersicon esculentum Mill.).</title>
        <authorList>
            <person name="Martinez-Barajas E."/>
            <person name="Luethy M.H."/>
            <person name="Randall D.D."/>
        </authorList>
    </citation>
    <scope>NUCLEOTIDE SEQUENCE [MRNA]</scope>
</reference>
<reference key="2">
    <citation type="journal article" date="1997" name="Plant Physiol.">
        <title>Divergent fructokinase genes are differentially expressed in tomato.</title>
        <authorList>
            <person name="Kanayama Y."/>
            <person name="Dai N."/>
            <person name="Granot D."/>
            <person name="Petreikov M."/>
            <person name="Schaffer A."/>
            <person name="Bennett A.B."/>
        </authorList>
    </citation>
    <scope>NUCLEOTIDE SEQUENCE [MRNA]</scope>
</reference>
<keyword id="KW-0067">ATP-binding</keyword>
<keyword id="KW-0119">Carbohydrate metabolism</keyword>
<keyword id="KW-0418">Kinase</keyword>
<keyword id="KW-0547">Nucleotide-binding</keyword>
<keyword id="KW-1185">Reference proteome</keyword>
<keyword id="KW-0808">Transferase</keyword>
<protein>
    <recommendedName>
        <fullName>Fructokinase-2</fullName>
        <ecNumber>2.7.1.4</ecNumber>
    </recommendedName>
</protein>
<gene>
    <name type="primary">FRK2</name>
</gene>
<name>SCRK2_SOLLC</name>
<comment type="function">
    <text evidence="1">May play an important role in maintaining the flux of carbon towards starch formation.</text>
</comment>
<comment type="catalytic activity">
    <reaction>
        <text>D-fructose + ATP = D-fructose 6-phosphate + ADP + H(+)</text>
        <dbReference type="Rhea" id="RHEA:16125"/>
        <dbReference type="ChEBI" id="CHEBI:15378"/>
        <dbReference type="ChEBI" id="CHEBI:30616"/>
        <dbReference type="ChEBI" id="CHEBI:37721"/>
        <dbReference type="ChEBI" id="CHEBI:61527"/>
        <dbReference type="ChEBI" id="CHEBI:456216"/>
        <dbReference type="EC" id="2.7.1.4"/>
    </reaction>
</comment>
<comment type="pathway">
    <text>Glycan biosynthesis; starch biosynthesis.</text>
</comment>
<comment type="similarity">
    <text evidence="2">Belongs to the carbohydrate kinase PfkB family.</text>
</comment>
<feature type="chain" id="PRO_0000252670" description="Fructokinase-2">
    <location>
        <begin position="1"/>
        <end position="328"/>
    </location>
</feature>
<organism>
    <name type="scientific">Solanum lycopersicum</name>
    <name type="common">Tomato</name>
    <name type="synonym">Lycopersicon esculentum</name>
    <dbReference type="NCBI Taxonomy" id="4081"/>
    <lineage>
        <taxon>Eukaryota</taxon>
        <taxon>Viridiplantae</taxon>
        <taxon>Streptophyta</taxon>
        <taxon>Embryophyta</taxon>
        <taxon>Tracheophyta</taxon>
        <taxon>Spermatophyta</taxon>
        <taxon>Magnoliopsida</taxon>
        <taxon>eudicotyledons</taxon>
        <taxon>Gunneridae</taxon>
        <taxon>Pentapetalae</taxon>
        <taxon>asterids</taxon>
        <taxon>lamiids</taxon>
        <taxon>Solanales</taxon>
        <taxon>Solanaceae</taxon>
        <taxon>Solanoideae</taxon>
        <taxon>Solaneae</taxon>
        <taxon>Solanum</taxon>
        <taxon>Solanum subgen. Lycopersicon</taxon>
    </lineage>
</organism>
<sequence length="328" mass="34763">MAVNGASSSGLIVSFGEMLIDFVPTVSGVSLAEAPGFLKAPGGAPANVAIAVTRLGGKSAFVGKLGDDEFGHMLAGILKTNGVQAEGINFDKGARTALAFVTLRADGEREFMFYRNPSADMLLTPAELNLDLIRSAKVFHYGSISLIVEPCRAAHMKAMEVAKEAGALLSYDPNLRLPLWPSAEEAKKQIKSIWDSADVIKVSDVELEFLTGSNKIDDESAMSLWHPNLKLLLVTLGEKGCNYYTKKFHGTVGGFHVKTVDTTGAGDSFVGALLTKIVDDQTILEDEARLKEVLRFSCACGAITTTKKGAIPALPTASEALTLLKGGA</sequence>